<sequence>MARYFRRRKFCRFTAEGVAEIDYKDIVTLKNYITESGKIVPSRITGTSAKYQRQLARAIKRARYLSLLPYTDLHQ</sequence>
<name>RS18_SHESM</name>
<organism>
    <name type="scientific">Shewanella sp. (strain MR-4)</name>
    <dbReference type="NCBI Taxonomy" id="60480"/>
    <lineage>
        <taxon>Bacteria</taxon>
        <taxon>Pseudomonadati</taxon>
        <taxon>Pseudomonadota</taxon>
        <taxon>Gammaproteobacteria</taxon>
        <taxon>Alteromonadales</taxon>
        <taxon>Shewanellaceae</taxon>
        <taxon>Shewanella</taxon>
    </lineage>
</organism>
<reference key="1">
    <citation type="submission" date="2006-08" db="EMBL/GenBank/DDBJ databases">
        <title>Complete sequence of Shewanella sp. MR-4.</title>
        <authorList>
            <consortium name="US DOE Joint Genome Institute"/>
            <person name="Copeland A."/>
            <person name="Lucas S."/>
            <person name="Lapidus A."/>
            <person name="Barry K."/>
            <person name="Detter J.C."/>
            <person name="Glavina del Rio T."/>
            <person name="Hammon N."/>
            <person name="Israni S."/>
            <person name="Dalin E."/>
            <person name="Tice H."/>
            <person name="Pitluck S."/>
            <person name="Kiss H."/>
            <person name="Brettin T."/>
            <person name="Bruce D."/>
            <person name="Han C."/>
            <person name="Tapia R."/>
            <person name="Gilna P."/>
            <person name="Schmutz J."/>
            <person name="Larimer F."/>
            <person name="Land M."/>
            <person name="Hauser L."/>
            <person name="Kyrpides N."/>
            <person name="Mikhailova N."/>
            <person name="Nealson K."/>
            <person name="Konstantinidis K."/>
            <person name="Klappenbach J."/>
            <person name="Tiedje J."/>
            <person name="Richardson P."/>
        </authorList>
    </citation>
    <scope>NUCLEOTIDE SEQUENCE [LARGE SCALE GENOMIC DNA]</scope>
    <source>
        <strain>MR-4</strain>
    </source>
</reference>
<gene>
    <name evidence="1" type="primary">rpsR</name>
    <name type="ordered locus">Shewmr4_3258</name>
</gene>
<accession>Q0HF41</accession>
<dbReference type="EMBL" id="CP000446">
    <property type="protein sequence ID" value="ABI40326.1"/>
    <property type="molecule type" value="Genomic_DNA"/>
</dbReference>
<dbReference type="RefSeq" id="WP_006083042.1">
    <property type="nucleotide sequence ID" value="NC_008321.1"/>
</dbReference>
<dbReference type="SMR" id="Q0HF41"/>
<dbReference type="GeneID" id="94726693"/>
<dbReference type="KEGG" id="she:Shewmr4_3258"/>
<dbReference type="HOGENOM" id="CLU_148710_2_3_6"/>
<dbReference type="GO" id="GO:0022627">
    <property type="term" value="C:cytosolic small ribosomal subunit"/>
    <property type="evidence" value="ECO:0007669"/>
    <property type="project" value="TreeGrafter"/>
</dbReference>
<dbReference type="GO" id="GO:0070181">
    <property type="term" value="F:small ribosomal subunit rRNA binding"/>
    <property type="evidence" value="ECO:0007669"/>
    <property type="project" value="TreeGrafter"/>
</dbReference>
<dbReference type="GO" id="GO:0003735">
    <property type="term" value="F:structural constituent of ribosome"/>
    <property type="evidence" value="ECO:0007669"/>
    <property type="project" value="InterPro"/>
</dbReference>
<dbReference type="GO" id="GO:0006412">
    <property type="term" value="P:translation"/>
    <property type="evidence" value="ECO:0007669"/>
    <property type="project" value="UniProtKB-UniRule"/>
</dbReference>
<dbReference type="FunFam" id="4.10.640.10:FF:000001">
    <property type="entry name" value="30S ribosomal protein S18"/>
    <property type="match status" value="1"/>
</dbReference>
<dbReference type="Gene3D" id="4.10.640.10">
    <property type="entry name" value="Ribosomal protein S18"/>
    <property type="match status" value="1"/>
</dbReference>
<dbReference type="HAMAP" id="MF_00270">
    <property type="entry name" value="Ribosomal_bS18"/>
    <property type="match status" value="1"/>
</dbReference>
<dbReference type="InterPro" id="IPR001648">
    <property type="entry name" value="Ribosomal_bS18"/>
</dbReference>
<dbReference type="InterPro" id="IPR018275">
    <property type="entry name" value="Ribosomal_bS18_CS"/>
</dbReference>
<dbReference type="InterPro" id="IPR036870">
    <property type="entry name" value="Ribosomal_bS18_sf"/>
</dbReference>
<dbReference type="NCBIfam" id="TIGR00165">
    <property type="entry name" value="S18"/>
    <property type="match status" value="1"/>
</dbReference>
<dbReference type="PANTHER" id="PTHR13479">
    <property type="entry name" value="30S RIBOSOMAL PROTEIN S18"/>
    <property type="match status" value="1"/>
</dbReference>
<dbReference type="PANTHER" id="PTHR13479:SF40">
    <property type="entry name" value="SMALL RIBOSOMAL SUBUNIT PROTEIN BS18M"/>
    <property type="match status" value="1"/>
</dbReference>
<dbReference type="Pfam" id="PF01084">
    <property type="entry name" value="Ribosomal_S18"/>
    <property type="match status" value="1"/>
</dbReference>
<dbReference type="PRINTS" id="PR00974">
    <property type="entry name" value="RIBOSOMALS18"/>
</dbReference>
<dbReference type="SUPFAM" id="SSF46911">
    <property type="entry name" value="Ribosomal protein S18"/>
    <property type="match status" value="1"/>
</dbReference>
<dbReference type="PROSITE" id="PS00057">
    <property type="entry name" value="RIBOSOMAL_S18"/>
    <property type="match status" value="1"/>
</dbReference>
<keyword id="KW-0687">Ribonucleoprotein</keyword>
<keyword id="KW-0689">Ribosomal protein</keyword>
<keyword id="KW-0694">RNA-binding</keyword>
<keyword id="KW-0699">rRNA-binding</keyword>
<feature type="chain" id="PRO_1000003607" description="Small ribosomal subunit protein bS18">
    <location>
        <begin position="1"/>
        <end position="75"/>
    </location>
</feature>
<evidence type="ECO:0000255" key="1">
    <source>
        <dbReference type="HAMAP-Rule" id="MF_00270"/>
    </source>
</evidence>
<evidence type="ECO:0000305" key="2"/>
<proteinExistence type="inferred from homology"/>
<comment type="function">
    <text evidence="1">Binds as a heterodimer with protein bS6 to the central domain of the 16S rRNA, where it helps stabilize the platform of the 30S subunit.</text>
</comment>
<comment type="subunit">
    <text evidence="1">Part of the 30S ribosomal subunit. Forms a tight heterodimer with protein bS6.</text>
</comment>
<comment type="similarity">
    <text evidence="1">Belongs to the bacterial ribosomal protein bS18 family.</text>
</comment>
<protein>
    <recommendedName>
        <fullName evidence="1">Small ribosomal subunit protein bS18</fullName>
    </recommendedName>
    <alternativeName>
        <fullName evidence="2">30S ribosomal protein S18</fullName>
    </alternativeName>
</protein>